<dbReference type="EMBL" id="AB264799">
    <property type="protein sequence ID" value="BAG12580.1"/>
    <property type="molecule type" value="Genomic_DNA"/>
</dbReference>
<dbReference type="RefSeq" id="YP_001718395.1">
    <property type="nucleotide sequence ID" value="NC_010431.1"/>
</dbReference>
<dbReference type="SMR" id="B1B1W5"/>
<dbReference type="GeneID" id="6000140"/>
<dbReference type="CTD" id="4519"/>
<dbReference type="GO" id="GO:0005743">
    <property type="term" value="C:mitochondrial inner membrane"/>
    <property type="evidence" value="ECO:0007669"/>
    <property type="project" value="UniProtKB-SubCell"/>
</dbReference>
<dbReference type="GO" id="GO:0045275">
    <property type="term" value="C:respiratory chain complex III"/>
    <property type="evidence" value="ECO:0007669"/>
    <property type="project" value="InterPro"/>
</dbReference>
<dbReference type="GO" id="GO:0046872">
    <property type="term" value="F:metal ion binding"/>
    <property type="evidence" value="ECO:0007669"/>
    <property type="project" value="UniProtKB-KW"/>
</dbReference>
<dbReference type="GO" id="GO:0008121">
    <property type="term" value="F:ubiquinol-cytochrome-c reductase activity"/>
    <property type="evidence" value="ECO:0007669"/>
    <property type="project" value="InterPro"/>
</dbReference>
<dbReference type="GO" id="GO:0006122">
    <property type="term" value="P:mitochondrial electron transport, ubiquinol to cytochrome c"/>
    <property type="evidence" value="ECO:0007669"/>
    <property type="project" value="TreeGrafter"/>
</dbReference>
<dbReference type="CDD" id="cd00290">
    <property type="entry name" value="cytochrome_b_C"/>
    <property type="match status" value="1"/>
</dbReference>
<dbReference type="CDD" id="cd00284">
    <property type="entry name" value="Cytochrome_b_N"/>
    <property type="match status" value="1"/>
</dbReference>
<dbReference type="FunFam" id="1.20.810.10:FF:000002">
    <property type="entry name" value="Cytochrome b"/>
    <property type="match status" value="1"/>
</dbReference>
<dbReference type="Gene3D" id="1.20.810.10">
    <property type="entry name" value="Cytochrome Bc1 Complex, Chain C"/>
    <property type="match status" value="1"/>
</dbReference>
<dbReference type="InterPro" id="IPR005798">
    <property type="entry name" value="Cyt_b/b6_C"/>
</dbReference>
<dbReference type="InterPro" id="IPR036150">
    <property type="entry name" value="Cyt_b/b6_C_sf"/>
</dbReference>
<dbReference type="InterPro" id="IPR005797">
    <property type="entry name" value="Cyt_b/b6_N"/>
</dbReference>
<dbReference type="InterPro" id="IPR027387">
    <property type="entry name" value="Cytb/b6-like_sf"/>
</dbReference>
<dbReference type="InterPro" id="IPR030689">
    <property type="entry name" value="Cytochrome_b"/>
</dbReference>
<dbReference type="InterPro" id="IPR048260">
    <property type="entry name" value="Cytochrome_b_C_euk/bac"/>
</dbReference>
<dbReference type="InterPro" id="IPR048259">
    <property type="entry name" value="Cytochrome_b_N_euk/bac"/>
</dbReference>
<dbReference type="InterPro" id="IPR016174">
    <property type="entry name" value="Di-haem_cyt_TM"/>
</dbReference>
<dbReference type="PANTHER" id="PTHR19271">
    <property type="entry name" value="CYTOCHROME B"/>
    <property type="match status" value="1"/>
</dbReference>
<dbReference type="PANTHER" id="PTHR19271:SF16">
    <property type="entry name" value="CYTOCHROME B"/>
    <property type="match status" value="1"/>
</dbReference>
<dbReference type="Pfam" id="PF00032">
    <property type="entry name" value="Cytochrom_B_C"/>
    <property type="match status" value="1"/>
</dbReference>
<dbReference type="Pfam" id="PF00033">
    <property type="entry name" value="Cytochrome_B"/>
    <property type="match status" value="1"/>
</dbReference>
<dbReference type="PIRSF" id="PIRSF038885">
    <property type="entry name" value="COB"/>
    <property type="match status" value="1"/>
</dbReference>
<dbReference type="SUPFAM" id="SSF81648">
    <property type="entry name" value="a domain/subunit of cytochrome bc1 complex (Ubiquinol-cytochrome c reductase)"/>
    <property type="match status" value="1"/>
</dbReference>
<dbReference type="SUPFAM" id="SSF81342">
    <property type="entry name" value="Transmembrane di-heme cytochromes"/>
    <property type="match status" value="1"/>
</dbReference>
<dbReference type="PROSITE" id="PS51003">
    <property type="entry name" value="CYTB_CTER"/>
    <property type="match status" value="1"/>
</dbReference>
<dbReference type="PROSITE" id="PS51002">
    <property type="entry name" value="CYTB_NTER"/>
    <property type="match status" value="1"/>
</dbReference>
<sequence length="378" mass="43389">MYSPIRKSHPLLKMMSGSFSDLPSPSNFSIWWNFGSLLGLCLVIQILSGLFLSMHYTSHVDLAFSSVAHIGRDVNYGWLLRSIHANGASFFFMCLYCHIGRGMYYMSYFFMETWNVGVVIFFLTMGTAFVGYVLPWGQMSFWGATVITNLASAIPYIGEILVQWVWGGFSVDNATLTRFFSFHFLFPFMIAGLSMVHLLFLHQTGSNNPLGLNSDCDKIPFHWFYSTKDIAGFLVFFFVFFIVVLLYPNGFTDPENFIPANPLVTPVHIQPEWYFLFAYAILRSIPNKLGGVVSLVASIAILFCLPLTISLMKFRSLVFYPLNQILFWSFCSIFLLLTWIGMRPVEDPYIFIGQILTVLYFSYFLLNPLILKFWDNLY</sequence>
<organism>
    <name type="scientific">Loxocorone allax</name>
    <name type="common">Goblet worm</name>
    <name type="synonym">Loxosomella allax</name>
    <dbReference type="NCBI Taxonomy" id="393181"/>
    <lineage>
        <taxon>Eukaryota</taxon>
        <taxon>Metazoa</taxon>
        <taxon>Spiralia</taxon>
        <taxon>Lophotrochozoa</taxon>
        <taxon>Entoprocta</taxon>
        <taxon>Loxosomatidae</taxon>
        <taxon>Loxocorone</taxon>
    </lineage>
</organism>
<gene>
    <name type="primary">mt:Cyt-b</name>
    <name type="synonym">Cob</name>
    <name type="synonym">cytb</name>
</gene>
<keyword id="KW-0249">Electron transport</keyword>
<keyword id="KW-0349">Heme</keyword>
<keyword id="KW-0408">Iron</keyword>
<keyword id="KW-0472">Membrane</keyword>
<keyword id="KW-0479">Metal-binding</keyword>
<keyword id="KW-0496">Mitochondrion</keyword>
<keyword id="KW-0999">Mitochondrion inner membrane</keyword>
<keyword id="KW-0679">Respiratory chain</keyword>
<keyword id="KW-0812">Transmembrane</keyword>
<keyword id="KW-1133">Transmembrane helix</keyword>
<keyword id="KW-0813">Transport</keyword>
<keyword id="KW-0830">Ubiquinone</keyword>
<feature type="chain" id="PRO_0000357462" description="Cytochrome b">
    <location>
        <begin position="1"/>
        <end position="378"/>
    </location>
</feature>
<feature type="transmembrane region" description="Helical" evidence="3">
    <location>
        <begin position="34"/>
        <end position="54"/>
    </location>
</feature>
<feature type="transmembrane region" description="Helical" evidence="3">
    <location>
        <begin position="78"/>
        <end position="100"/>
    </location>
</feature>
<feature type="transmembrane region" description="Helical" evidence="3">
    <location>
        <begin position="113"/>
        <end position="133"/>
    </location>
</feature>
<feature type="transmembrane region" description="Helical" evidence="3">
    <location>
        <begin position="179"/>
        <end position="199"/>
    </location>
</feature>
<feature type="transmembrane region" description="Helical" evidence="3">
    <location>
        <begin position="225"/>
        <end position="245"/>
    </location>
</feature>
<feature type="transmembrane region" description="Helical" evidence="4">
    <location>
        <begin position="289"/>
        <end position="306"/>
    </location>
</feature>
<feature type="transmembrane region" description="Helical" evidence="4">
    <location>
        <begin position="313"/>
        <end position="342"/>
    </location>
</feature>
<feature type="transmembrane region" description="Helical" evidence="4">
    <location>
        <begin position="350"/>
        <end position="369"/>
    </location>
</feature>
<feature type="binding site" description="axial binding residue" evidence="3">
    <location>
        <position position="84"/>
    </location>
    <ligand>
        <name>heme b</name>
        <dbReference type="ChEBI" id="CHEBI:60344"/>
        <label>b562</label>
    </ligand>
    <ligandPart>
        <name>Fe</name>
        <dbReference type="ChEBI" id="CHEBI:18248"/>
    </ligandPart>
</feature>
<feature type="binding site" description="axial binding residue" evidence="3">
    <location>
        <position position="98"/>
    </location>
    <ligand>
        <name>heme b</name>
        <dbReference type="ChEBI" id="CHEBI:60344"/>
        <label>b566</label>
    </ligand>
    <ligandPart>
        <name>Fe</name>
        <dbReference type="ChEBI" id="CHEBI:18248"/>
    </ligandPart>
</feature>
<feature type="binding site" description="axial binding residue" evidence="3">
    <location>
        <position position="183"/>
    </location>
    <ligand>
        <name>heme b</name>
        <dbReference type="ChEBI" id="CHEBI:60344"/>
        <label>b562</label>
    </ligand>
    <ligandPart>
        <name>Fe</name>
        <dbReference type="ChEBI" id="CHEBI:18248"/>
    </ligandPart>
</feature>
<feature type="binding site" description="axial binding residue" evidence="3">
    <location>
        <position position="197"/>
    </location>
    <ligand>
        <name>heme b</name>
        <dbReference type="ChEBI" id="CHEBI:60344"/>
        <label>b566</label>
    </ligand>
    <ligandPart>
        <name>Fe</name>
        <dbReference type="ChEBI" id="CHEBI:18248"/>
    </ligandPart>
</feature>
<feature type="binding site" evidence="2">
    <location>
        <position position="202"/>
    </location>
    <ligand>
        <name>a ubiquinone</name>
        <dbReference type="ChEBI" id="CHEBI:16389"/>
    </ligand>
</feature>
<comment type="function">
    <text evidence="3">Component of the ubiquinol-cytochrome c reductase complex (complex III or cytochrome b-c1 complex) that is part of the mitochondrial respiratory chain. The b-c1 complex mediates electron transfer from ubiquinol to cytochrome c. Contributes to the generation of a proton gradient across the mitochondrial membrane that is then used for ATP synthesis.</text>
</comment>
<comment type="cofactor">
    <cofactor evidence="3">
        <name>heme b</name>
        <dbReference type="ChEBI" id="CHEBI:60344"/>
    </cofactor>
    <text evidence="3">Binds 2 heme b groups non-covalently.</text>
</comment>
<comment type="subunit">
    <text evidence="1">The main subunits of complex b-c1 are: cytochrome b, cytochrome c1 and the Rieske protein.</text>
</comment>
<comment type="subcellular location">
    <subcellularLocation>
        <location evidence="3">Mitochondrion inner membrane</location>
        <topology evidence="3">Multi-pass membrane protein</topology>
    </subcellularLocation>
</comment>
<comment type="similarity">
    <text evidence="5 6">Belongs to the cytochrome b family.</text>
</comment>
<comment type="caution">
    <text evidence="3">The protein contains an even number of transmembrane helices, fewer than predicted by bioinformatics tools.</text>
</comment>
<name>CYB_LOXAA</name>
<reference key="1">
    <citation type="journal article" date="2008" name="Mol. Phylogenet. Evol.">
        <title>Complete nucleotide sequences of mitochondrial genomes of two solitary entoprocts, Loxocorone allax and Loxosomella aloxiata: Implications for lophotrochozoan phylogeny.</title>
        <authorList>
            <person name="Yokobori S."/>
            <person name="Iseto T."/>
            <person name="Asakawa S."/>
            <person name="Sasaki T."/>
            <person name="Shimizu N."/>
            <person name="Yamagishi A."/>
            <person name="Oshima T."/>
            <person name="Hirose E."/>
        </authorList>
    </citation>
    <scope>NUCLEOTIDE SEQUENCE [GENOMIC DNA]</scope>
</reference>
<proteinExistence type="inferred from homology"/>
<geneLocation type="mitochondrion"/>
<evidence type="ECO:0000250" key="1"/>
<evidence type="ECO:0000250" key="2">
    <source>
        <dbReference type="UniProtKB" id="P00157"/>
    </source>
</evidence>
<evidence type="ECO:0000250" key="3">
    <source>
        <dbReference type="UniProtKB" id="P00163"/>
    </source>
</evidence>
<evidence type="ECO:0000255" key="4"/>
<evidence type="ECO:0000255" key="5">
    <source>
        <dbReference type="PROSITE-ProRule" id="PRU00967"/>
    </source>
</evidence>
<evidence type="ECO:0000255" key="6">
    <source>
        <dbReference type="PROSITE-ProRule" id="PRU00968"/>
    </source>
</evidence>
<protein>
    <recommendedName>
        <fullName>Cytochrome b</fullName>
    </recommendedName>
    <alternativeName>
        <fullName>Complex III subunit 3</fullName>
    </alternativeName>
    <alternativeName>
        <fullName>Complex III subunit III</fullName>
    </alternativeName>
    <alternativeName>
        <fullName>Cytochrome b-c1 complex subunit 3</fullName>
    </alternativeName>
    <alternativeName>
        <fullName>Ubiquinol-cytochrome-c reductase complex cytochrome b subunit</fullName>
    </alternativeName>
</protein>
<accession>B1B1W5</accession>